<reference key="1">
    <citation type="journal article" date="2008" name="J. Bacteriol.">
        <title>The pangenome structure of Escherichia coli: comparative genomic analysis of E. coli commensal and pathogenic isolates.</title>
        <authorList>
            <person name="Rasko D.A."/>
            <person name="Rosovitz M.J."/>
            <person name="Myers G.S.A."/>
            <person name="Mongodin E.F."/>
            <person name="Fricke W.F."/>
            <person name="Gajer P."/>
            <person name="Crabtree J."/>
            <person name="Sebaihia M."/>
            <person name="Thomson N.R."/>
            <person name="Chaudhuri R."/>
            <person name="Henderson I.R."/>
            <person name="Sperandio V."/>
            <person name="Ravel J."/>
        </authorList>
    </citation>
    <scope>NUCLEOTIDE SEQUENCE [LARGE SCALE GENOMIC DNA]</scope>
    <source>
        <strain>HS</strain>
    </source>
</reference>
<feature type="chain" id="PRO_1000061173" description="UDP-2,3-diacylglucosamine hydrolase">
    <location>
        <begin position="1"/>
        <end position="240"/>
    </location>
</feature>
<feature type="binding site" evidence="1">
    <location>
        <position position="8"/>
    </location>
    <ligand>
        <name>Mn(2+)</name>
        <dbReference type="ChEBI" id="CHEBI:29035"/>
        <label>1</label>
    </ligand>
</feature>
<feature type="binding site" evidence="1">
    <location>
        <position position="10"/>
    </location>
    <ligand>
        <name>Mn(2+)</name>
        <dbReference type="ChEBI" id="CHEBI:29035"/>
        <label>1</label>
    </ligand>
</feature>
<feature type="binding site" evidence="1">
    <location>
        <position position="41"/>
    </location>
    <ligand>
        <name>Mn(2+)</name>
        <dbReference type="ChEBI" id="CHEBI:29035"/>
        <label>1</label>
    </ligand>
</feature>
<feature type="binding site" evidence="1">
    <location>
        <position position="41"/>
    </location>
    <ligand>
        <name>Mn(2+)</name>
        <dbReference type="ChEBI" id="CHEBI:29035"/>
        <label>2</label>
    </ligand>
</feature>
<feature type="binding site" evidence="1">
    <location>
        <begin position="79"/>
        <end position="80"/>
    </location>
    <ligand>
        <name>substrate</name>
    </ligand>
</feature>
<feature type="binding site" evidence="1">
    <location>
        <position position="79"/>
    </location>
    <ligand>
        <name>Mn(2+)</name>
        <dbReference type="ChEBI" id="CHEBI:29035"/>
        <label>2</label>
    </ligand>
</feature>
<feature type="binding site" evidence="1">
    <location>
        <position position="114"/>
    </location>
    <ligand>
        <name>Mn(2+)</name>
        <dbReference type="ChEBI" id="CHEBI:29035"/>
        <label>2</label>
    </ligand>
</feature>
<feature type="binding site" evidence="1">
    <location>
        <position position="122"/>
    </location>
    <ligand>
        <name>substrate</name>
    </ligand>
</feature>
<feature type="binding site" evidence="1">
    <location>
        <position position="160"/>
    </location>
    <ligand>
        <name>substrate</name>
    </ligand>
</feature>
<feature type="binding site" evidence="1">
    <location>
        <position position="164"/>
    </location>
    <ligand>
        <name>substrate</name>
    </ligand>
</feature>
<feature type="binding site" evidence="1">
    <location>
        <position position="167"/>
    </location>
    <ligand>
        <name>substrate</name>
    </ligand>
</feature>
<feature type="binding site" evidence="1">
    <location>
        <position position="195"/>
    </location>
    <ligand>
        <name>Mn(2+)</name>
        <dbReference type="ChEBI" id="CHEBI:29035"/>
        <label>2</label>
    </ligand>
</feature>
<feature type="binding site" evidence="1">
    <location>
        <position position="195"/>
    </location>
    <ligand>
        <name>substrate</name>
    </ligand>
</feature>
<feature type="binding site" evidence="1">
    <location>
        <position position="197"/>
    </location>
    <ligand>
        <name>Mn(2+)</name>
        <dbReference type="ChEBI" id="CHEBI:29035"/>
        <label>1</label>
    </ligand>
</feature>
<organism>
    <name type="scientific">Escherichia coli O9:H4 (strain HS)</name>
    <dbReference type="NCBI Taxonomy" id="331112"/>
    <lineage>
        <taxon>Bacteria</taxon>
        <taxon>Pseudomonadati</taxon>
        <taxon>Pseudomonadota</taxon>
        <taxon>Gammaproteobacteria</taxon>
        <taxon>Enterobacterales</taxon>
        <taxon>Enterobacteriaceae</taxon>
        <taxon>Escherichia</taxon>
    </lineage>
</organism>
<accession>A7ZXH9</accession>
<sequence length="240" mass="26894">MATLFIADLHLCVEEPAITAGFLRFLAGEARKADALYILGDLFEAWIGDDDPNPLHRKMAAAIKAVSDSGVPCYFIHGNRDFLLGKRFARESGMTLLPEEKVLELYGRRVLIMHGDTLCTDDAGYQAFRAKVHKPWLQTLFLALPLFVRKRIAARMRANSKEANSSKSLAIMDVNQNAVVSAMEKHQVQWLIHGHTHRPAVHELIANQQPAFRVVLGAWHTEGSMVKVTADDVELIHFPF</sequence>
<protein>
    <recommendedName>
        <fullName evidence="1">UDP-2,3-diacylglucosamine hydrolase</fullName>
        <ecNumber evidence="1">3.6.1.54</ecNumber>
    </recommendedName>
    <alternativeName>
        <fullName evidence="1">UDP-2,3-diacylglucosamine diphosphatase</fullName>
    </alternativeName>
</protein>
<proteinExistence type="inferred from homology"/>
<evidence type="ECO:0000255" key="1">
    <source>
        <dbReference type="HAMAP-Rule" id="MF_00575"/>
    </source>
</evidence>
<comment type="function">
    <text evidence="1">Hydrolyzes the pyrophosphate bond of UDP-2,3-diacylglucosamine to yield 2,3-diacylglucosamine 1-phosphate (lipid X) and UMP by catalyzing the attack of water at the alpha-P atom. Involved in the biosynthesis of lipid A, a phosphorylated glycolipid that anchors the lipopolysaccharide to the outer membrane of the cell.</text>
</comment>
<comment type="catalytic activity">
    <reaction evidence="1">
        <text>UDP-2-N,3-O-bis[(3R)-3-hydroxytetradecanoyl]-alpha-D-glucosamine + H2O = 2-N,3-O-bis[(3R)-3-hydroxytetradecanoyl]-alpha-D-glucosaminyl 1-phosphate + UMP + 2 H(+)</text>
        <dbReference type="Rhea" id="RHEA:25213"/>
        <dbReference type="ChEBI" id="CHEBI:15377"/>
        <dbReference type="ChEBI" id="CHEBI:15378"/>
        <dbReference type="ChEBI" id="CHEBI:57865"/>
        <dbReference type="ChEBI" id="CHEBI:57957"/>
        <dbReference type="ChEBI" id="CHEBI:78847"/>
        <dbReference type="EC" id="3.6.1.54"/>
    </reaction>
</comment>
<comment type="cofactor">
    <cofactor evidence="1">
        <name>Mn(2+)</name>
        <dbReference type="ChEBI" id="CHEBI:29035"/>
    </cofactor>
    <text evidence="1">Binds 2 Mn(2+) ions per subunit in a binuclear metal center.</text>
</comment>
<comment type="pathway">
    <text evidence="1">Glycolipid biosynthesis; lipid IV(A) biosynthesis; lipid IV(A) from (3R)-3-hydroxytetradecanoyl-[acyl-carrier-protein] and UDP-N-acetyl-alpha-D-glucosamine: step 4/6.</text>
</comment>
<comment type="subcellular location">
    <subcellularLocation>
        <location evidence="1">Cell inner membrane</location>
        <topology evidence="1">Peripheral membrane protein</topology>
        <orientation evidence="1">Cytoplasmic side</orientation>
    </subcellularLocation>
</comment>
<comment type="similarity">
    <text evidence="1">Belongs to the LpxH family.</text>
</comment>
<gene>
    <name evidence="1" type="primary">lpxH</name>
    <name type="ordered locus">EcHS_A0599</name>
</gene>
<keyword id="KW-0997">Cell inner membrane</keyword>
<keyword id="KW-1003">Cell membrane</keyword>
<keyword id="KW-0378">Hydrolase</keyword>
<keyword id="KW-0441">Lipid A biosynthesis</keyword>
<keyword id="KW-0444">Lipid biosynthesis</keyword>
<keyword id="KW-0443">Lipid metabolism</keyword>
<keyword id="KW-0464">Manganese</keyword>
<keyword id="KW-0472">Membrane</keyword>
<keyword id="KW-0479">Metal-binding</keyword>
<dbReference type="EC" id="3.6.1.54" evidence="1"/>
<dbReference type="EMBL" id="CP000802">
    <property type="protein sequence ID" value="ABV04983.1"/>
    <property type="molecule type" value="Genomic_DNA"/>
</dbReference>
<dbReference type="RefSeq" id="WP_000212247.1">
    <property type="nucleotide sequence ID" value="NC_009800.1"/>
</dbReference>
<dbReference type="SMR" id="A7ZXH9"/>
<dbReference type="KEGG" id="ecx:EcHS_A0599"/>
<dbReference type="HOGENOM" id="CLU_074586_0_0_6"/>
<dbReference type="UniPathway" id="UPA00359">
    <property type="reaction ID" value="UER00480"/>
</dbReference>
<dbReference type="GO" id="GO:0005737">
    <property type="term" value="C:cytoplasm"/>
    <property type="evidence" value="ECO:0007669"/>
    <property type="project" value="InterPro"/>
</dbReference>
<dbReference type="GO" id="GO:0019897">
    <property type="term" value="C:extrinsic component of plasma membrane"/>
    <property type="evidence" value="ECO:0007669"/>
    <property type="project" value="UniProtKB-UniRule"/>
</dbReference>
<dbReference type="GO" id="GO:0030145">
    <property type="term" value="F:manganese ion binding"/>
    <property type="evidence" value="ECO:0007669"/>
    <property type="project" value="UniProtKB-UniRule"/>
</dbReference>
<dbReference type="GO" id="GO:0008758">
    <property type="term" value="F:UDP-2,3-diacylglucosamine hydrolase activity"/>
    <property type="evidence" value="ECO:0007669"/>
    <property type="project" value="UniProtKB-UniRule"/>
</dbReference>
<dbReference type="GO" id="GO:0009245">
    <property type="term" value="P:lipid A biosynthetic process"/>
    <property type="evidence" value="ECO:0007669"/>
    <property type="project" value="UniProtKB-UniRule"/>
</dbReference>
<dbReference type="CDD" id="cd07398">
    <property type="entry name" value="MPP_YbbF-LpxH"/>
    <property type="match status" value="1"/>
</dbReference>
<dbReference type="FunFam" id="3.60.21.10:FF:000012">
    <property type="entry name" value="UDP-2,3-diacylglucosamine hydrolase"/>
    <property type="match status" value="1"/>
</dbReference>
<dbReference type="Gene3D" id="3.60.21.10">
    <property type="match status" value="1"/>
</dbReference>
<dbReference type="HAMAP" id="MF_00575">
    <property type="entry name" value="LpxH"/>
    <property type="match status" value="1"/>
</dbReference>
<dbReference type="InterPro" id="IPR004843">
    <property type="entry name" value="Calcineurin-like_PHP_ApaH"/>
</dbReference>
<dbReference type="InterPro" id="IPR043461">
    <property type="entry name" value="LpxH-like"/>
</dbReference>
<dbReference type="InterPro" id="IPR029052">
    <property type="entry name" value="Metallo-depent_PP-like"/>
</dbReference>
<dbReference type="InterPro" id="IPR010138">
    <property type="entry name" value="UDP-diacylglucosamine_Hdrlase"/>
</dbReference>
<dbReference type="NCBIfam" id="TIGR01854">
    <property type="entry name" value="lipid_A_lpxH"/>
    <property type="match status" value="1"/>
</dbReference>
<dbReference type="NCBIfam" id="NF003743">
    <property type="entry name" value="PRK05340.1"/>
    <property type="match status" value="1"/>
</dbReference>
<dbReference type="PANTHER" id="PTHR34990:SF1">
    <property type="entry name" value="UDP-2,3-DIACYLGLUCOSAMINE HYDROLASE"/>
    <property type="match status" value="1"/>
</dbReference>
<dbReference type="PANTHER" id="PTHR34990">
    <property type="entry name" value="UDP-2,3-DIACYLGLUCOSAMINE HYDROLASE-RELATED"/>
    <property type="match status" value="1"/>
</dbReference>
<dbReference type="Pfam" id="PF00149">
    <property type="entry name" value="Metallophos"/>
    <property type="match status" value="1"/>
</dbReference>
<dbReference type="SUPFAM" id="SSF56300">
    <property type="entry name" value="Metallo-dependent phosphatases"/>
    <property type="match status" value="1"/>
</dbReference>
<name>LPXH_ECOHS</name>